<keyword id="KW-0156">Chromatin regulator</keyword>
<keyword id="KW-0963">Cytoplasm</keyword>
<keyword id="KW-0378">Hydrolase</keyword>
<keyword id="KW-0539">Nucleus</keyword>
<keyword id="KW-1185">Reference proteome</keyword>
<keyword id="KW-0678">Repressor</keyword>
<keyword id="KW-0804">Transcription</keyword>
<keyword id="KW-0805">Transcription regulation</keyword>
<proteinExistence type="evidence at transcript level"/>
<evidence type="ECO:0000250" key="1"/>
<evidence type="ECO:0000256" key="2">
    <source>
        <dbReference type="SAM" id="MobiDB-lite"/>
    </source>
</evidence>
<evidence type="ECO:0000269" key="3">
    <source>
    </source>
</evidence>
<evidence type="ECO:0000305" key="4"/>
<gene>
    <name type="primary">hdaD</name>
    <name type="ORF">DDB_G0279267</name>
</gene>
<organism>
    <name type="scientific">Dictyostelium discoideum</name>
    <name type="common">Social amoeba</name>
    <dbReference type="NCBI Taxonomy" id="44689"/>
    <lineage>
        <taxon>Eukaryota</taxon>
        <taxon>Amoebozoa</taxon>
        <taxon>Evosea</taxon>
        <taxon>Eumycetozoa</taxon>
        <taxon>Dictyostelia</taxon>
        <taxon>Dictyosteliales</taxon>
        <taxon>Dictyosteliaceae</taxon>
        <taxon>Dictyostelium</taxon>
    </lineage>
</organism>
<dbReference type="EC" id="3.5.1.98"/>
<dbReference type="EMBL" id="AAFI02000030">
    <property type="protein sequence ID" value="EAL67782.1"/>
    <property type="molecule type" value="Genomic_DNA"/>
</dbReference>
<dbReference type="RefSeq" id="XP_641762.1">
    <property type="nucleotide sequence ID" value="XM_636670.1"/>
</dbReference>
<dbReference type="SMR" id="Q54X15"/>
<dbReference type="FunCoup" id="Q54X15">
    <property type="interactions" value="476"/>
</dbReference>
<dbReference type="STRING" id="44689.Q54X15"/>
<dbReference type="GlyGen" id="Q54X15">
    <property type="glycosylation" value="1 site"/>
</dbReference>
<dbReference type="PaxDb" id="44689-DDB0237655"/>
<dbReference type="EnsemblProtists" id="EAL67782">
    <property type="protein sequence ID" value="EAL67782"/>
    <property type="gene ID" value="DDB_G0279267"/>
</dbReference>
<dbReference type="GeneID" id="8621960"/>
<dbReference type="KEGG" id="ddi:DDB_G0279267"/>
<dbReference type="dictyBase" id="DDB_G0279267">
    <property type="gene designation" value="hdaD"/>
</dbReference>
<dbReference type="VEuPathDB" id="AmoebaDB:DDB_G0279267"/>
<dbReference type="eggNOG" id="KOG1343">
    <property type="taxonomic scope" value="Eukaryota"/>
</dbReference>
<dbReference type="HOGENOM" id="CLU_249274_0_0_1"/>
<dbReference type="InParanoid" id="Q54X15"/>
<dbReference type="OMA" id="AQRWRCK"/>
<dbReference type="Reactome" id="R-DDI-3108214">
    <property type="pathway name" value="SUMOylation of DNA damage response and repair proteins"/>
</dbReference>
<dbReference type="Reactome" id="R-DDI-3214815">
    <property type="pathway name" value="HDACs deacetylate histones"/>
</dbReference>
<dbReference type="Reactome" id="R-DDI-3371511">
    <property type="pathway name" value="HSF1 activation"/>
</dbReference>
<dbReference type="Reactome" id="R-DDI-5617833">
    <property type="pathway name" value="Cilium Assembly"/>
</dbReference>
<dbReference type="Reactome" id="R-DDI-9646399">
    <property type="pathway name" value="Aggrephagy"/>
</dbReference>
<dbReference type="PRO" id="PR:Q54X15"/>
<dbReference type="Proteomes" id="UP000002195">
    <property type="component" value="Chromosome 3"/>
</dbReference>
<dbReference type="GO" id="GO:0005737">
    <property type="term" value="C:cytoplasm"/>
    <property type="evidence" value="ECO:0007669"/>
    <property type="project" value="UniProtKB-SubCell"/>
</dbReference>
<dbReference type="GO" id="GO:0000118">
    <property type="term" value="C:histone deacetylase complex"/>
    <property type="evidence" value="ECO:0000318"/>
    <property type="project" value="GO_Central"/>
</dbReference>
<dbReference type="GO" id="GO:0004407">
    <property type="term" value="F:histone deacetylase activity"/>
    <property type="evidence" value="ECO:0000318"/>
    <property type="project" value="GO_Central"/>
</dbReference>
<dbReference type="GO" id="GO:0141221">
    <property type="term" value="F:histone deacetylase activity, hydrolytic mechanism"/>
    <property type="evidence" value="ECO:0007669"/>
    <property type="project" value="UniProtKB-EC"/>
</dbReference>
<dbReference type="GO" id="GO:0040029">
    <property type="term" value="P:epigenetic regulation of gene expression"/>
    <property type="evidence" value="ECO:0000318"/>
    <property type="project" value="GO_Central"/>
</dbReference>
<dbReference type="Gene3D" id="3.40.800.20">
    <property type="entry name" value="Histone deacetylase domain"/>
    <property type="match status" value="1"/>
</dbReference>
<dbReference type="InterPro" id="IPR050284">
    <property type="entry name" value="HDAC_PDAC"/>
</dbReference>
<dbReference type="InterPro" id="IPR023801">
    <property type="entry name" value="His_deacetylse_dom"/>
</dbReference>
<dbReference type="InterPro" id="IPR037138">
    <property type="entry name" value="His_deacetylse_dom_sf"/>
</dbReference>
<dbReference type="InterPro" id="IPR023696">
    <property type="entry name" value="Ureohydrolase_dom_sf"/>
</dbReference>
<dbReference type="PANTHER" id="PTHR10625:SF5">
    <property type="entry name" value="HISTONE DEACETYLASE"/>
    <property type="match status" value="1"/>
</dbReference>
<dbReference type="PANTHER" id="PTHR10625">
    <property type="entry name" value="HISTONE DEACETYLASE HDAC1-RELATED"/>
    <property type="match status" value="1"/>
</dbReference>
<dbReference type="Pfam" id="PF00850">
    <property type="entry name" value="Hist_deacetyl"/>
    <property type="match status" value="1"/>
</dbReference>
<dbReference type="SUPFAM" id="SSF52768">
    <property type="entry name" value="Arginase/deacetylase"/>
    <property type="match status" value="2"/>
</dbReference>
<protein>
    <recommendedName>
        <fullName>Type-2 histone deacetylase 1</fullName>
        <shortName>DdHdaD</shortName>
        <ecNumber>3.5.1.98</ecNumber>
    </recommendedName>
</protein>
<comment type="function">
    <text evidence="1">Responsible for the deacetylation of lysine residues on the N-terminal part of the core histones (H2A, H2B, H3 and H4). Histone deacetylation plays an important role in transcriptional regulation, cell cycle progression and developmental events. Histone deacetylases act via the formation of large multiprotein complexes (By similarity).</text>
</comment>
<comment type="catalytic activity">
    <reaction>
        <text>N(6)-acetyl-L-lysyl-[histone] + H2O = L-lysyl-[histone] + acetate</text>
        <dbReference type="Rhea" id="RHEA:58196"/>
        <dbReference type="Rhea" id="RHEA-COMP:9845"/>
        <dbReference type="Rhea" id="RHEA-COMP:11338"/>
        <dbReference type="ChEBI" id="CHEBI:15377"/>
        <dbReference type="ChEBI" id="CHEBI:29969"/>
        <dbReference type="ChEBI" id="CHEBI:30089"/>
        <dbReference type="ChEBI" id="CHEBI:61930"/>
        <dbReference type="EC" id="3.5.1.98"/>
    </reaction>
</comment>
<comment type="subcellular location">
    <subcellularLocation>
        <location evidence="1">Nucleus</location>
    </subcellularLocation>
    <subcellularLocation>
        <location evidence="1">Cytoplasm</location>
    </subcellularLocation>
</comment>
<comment type="developmental stage">
    <text evidence="3">Down-regulated during terminal differentiation of cells into spores and stalk.</text>
</comment>
<comment type="similarity">
    <text evidence="4">Belongs to the histone deacetylase family. HD type 2 subfamily.</text>
</comment>
<feature type="chain" id="PRO_0000331371" description="Type-2 histone deacetylase 1">
    <location>
        <begin position="1"/>
        <end position="1489"/>
    </location>
</feature>
<feature type="region of interest" description="Disordered" evidence="2">
    <location>
        <begin position="135"/>
        <end position="259"/>
    </location>
</feature>
<feature type="region of interest" description="Disordered" evidence="2">
    <location>
        <begin position="281"/>
        <end position="556"/>
    </location>
</feature>
<feature type="region of interest" description="Disordered" evidence="2">
    <location>
        <begin position="915"/>
        <end position="935"/>
    </location>
</feature>
<feature type="region of interest" description="Disordered" evidence="2">
    <location>
        <begin position="955"/>
        <end position="1024"/>
    </location>
</feature>
<feature type="region of interest" description="Disordered" evidence="2">
    <location>
        <begin position="1151"/>
        <end position="1185"/>
    </location>
</feature>
<feature type="region of interest" description="Disordered" evidence="2">
    <location>
        <begin position="1325"/>
        <end position="1374"/>
    </location>
</feature>
<feature type="compositionally biased region" description="Low complexity" evidence="2">
    <location>
        <begin position="135"/>
        <end position="163"/>
    </location>
</feature>
<feature type="compositionally biased region" description="Low complexity" evidence="2">
    <location>
        <begin position="190"/>
        <end position="259"/>
    </location>
</feature>
<feature type="compositionally biased region" description="Low complexity" evidence="2">
    <location>
        <begin position="281"/>
        <end position="306"/>
    </location>
</feature>
<feature type="compositionally biased region" description="Low complexity" evidence="2">
    <location>
        <begin position="325"/>
        <end position="399"/>
    </location>
</feature>
<feature type="compositionally biased region" description="Polar residues" evidence="2">
    <location>
        <begin position="400"/>
        <end position="430"/>
    </location>
</feature>
<feature type="compositionally biased region" description="Low complexity" evidence="2">
    <location>
        <begin position="431"/>
        <end position="450"/>
    </location>
</feature>
<feature type="compositionally biased region" description="Low complexity" evidence="2">
    <location>
        <begin position="486"/>
        <end position="553"/>
    </location>
</feature>
<feature type="compositionally biased region" description="Low complexity" evidence="2">
    <location>
        <begin position="915"/>
        <end position="928"/>
    </location>
</feature>
<feature type="compositionally biased region" description="Low complexity" evidence="2">
    <location>
        <begin position="959"/>
        <end position="988"/>
    </location>
</feature>
<feature type="compositionally biased region" description="Basic and acidic residues" evidence="2">
    <location>
        <begin position="989"/>
        <end position="1001"/>
    </location>
</feature>
<feature type="compositionally biased region" description="Basic and acidic residues" evidence="2">
    <location>
        <begin position="1010"/>
        <end position="1024"/>
    </location>
</feature>
<feature type="compositionally biased region" description="Low complexity" evidence="2">
    <location>
        <begin position="1158"/>
        <end position="1180"/>
    </location>
</feature>
<feature type="compositionally biased region" description="Acidic residues" evidence="2">
    <location>
        <begin position="1325"/>
        <end position="1335"/>
    </location>
</feature>
<feature type="compositionally biased region" description="Low complexity" evidence="2">
    <location>
        <begin position="1336"/>
        <end position="1367"/>
    </location>
</feature>
<feature type="active site" description="Proton acceptor" evidence="1">
    <location>
        <position position="1232"/>
    </location>
</feature>
<reference key="1">
    <citation type="journal article" date="2005" name="Nature">
        <title>The genome of the social amoeba Dictyostelium discoideum.</title>
        <authorList>
            <person name="Eichinger L."/>
            <person name="Pachebat J.A."/>
            <person name="Gloeckner G."/>
            <person name="Rajandream M.A."/>
            <person name="Sucgang R."/>
            <person name="Berriman M."/>
            <person name="Song J."/>
            <person name="Olsen R."/>
            <person name="Szafranski K."/>
            <person name="Xu Q."/>
            <person name="Tunggal B."/>
            <person name="Kummerfeld S."/>
            <person name="Madera M."/>
            <person name="Konfortov B.A."/>
            <person name="Rivero F."/>
            <person name="Bankier A.T."/>
            <person name="Lehmann R."/>
            <person name="Hamlin N."/>
            <person name="Davies R."/>
            <person name="Gaudet P."/>
            <person name="Fey P."/>
            <person name="Pilcher K."/>
            <person name="Chen G."/>
            <person name="Saunders D."/>
            <person name="Sodergren E.J."/>
            <person name="Davis P."/>
            <person name="Kerhornou A."/>
            <person name="Nie X."/>
            <person name="Hall N."/>
            <person name="Anjard C."/>
            <person name="Hemphill L."/>
            <person name="Bason N."/>
            <person name="Farbrother P."/>
            <person name="Desany B."/>
            <person name="Just E."/>
            <person name="Morio T."/>
            <person name="Rost R."/>
            <person name="Churcher C.M."/>
            <person name="Cooper J."/>
            <person name="Haydock S."/>
            <person name="van Driessche N."/>
            <person name="Cronin A."/>
            <person name="Goodhead I."/>
            <person name="Muzny D.M."/>
            <person name="Mourier T."/>
            <person name="Pain A."/>
            <person name="Lu M."/>
            <person name="Harper D."/>
            <person name="Lindsay R."/>
            <person name="Hauser H."/>
            <person name="James K.D."/>
            <person name="Quiles M."/>
            <person name="Madan Babu M."/>
            <person name="Saito T."/>
            <person name="Buchrieser C."/>
            <person name="Wardroper A."/>
            <person name="Felder M."/>
            <person name="Thangavelu M."/>
            <person name="Johnson D."/>
            <person name="Knights A."/>
            <person name="Loulseged H."/>
            <person name="Mungall K.L."/>
            <person name="Oliver K."/>
            <person name="Price C."/>
            <person name="Quail M.A."/>
            <person name="Urushihara H."/>
            <person name="Hernandez J."/>
            <person name="Rabbinowitsch E."/>
            <person name="Steffen D."/>
            <person name="Sanders M."/>
            <person name="Ma J."/>
            <person name="Kohara Y."/>
            <person name="Sharp S."/>
            <person name="Simmonds M.N."/>
            <person name="Spiegler S."/>
            <person name="Tivey A."/>
            <person name="Sugano S."/>
            <person name="White B."/>
            <person name="Walker D."/>
            <person name="Woodward J.R."/>
            <person name="Winckler T."/>
            <person name="Tanaka Y."/>
            <person name="Shaulsky G."/>
            <person name="Schleicher M."/>
            <person name="Weinstock G.M."/>
            <person name="Rosenthal A."/>
            <person name="Cox E.C."/>
            <person name="Chisholm R.L."/>
            <person name="Gibbs R.A."/>
            <person name="Loomis W.F."/>
            <person name="Platzer M."/>
            <person name="Kay R.R."/>
            <person name="Williams J.G."/>
            <person name="Dear P.H."/>
            <person name="Noegel A.A."/>
            <person name="Barrell B.G."/>
            <person name="Kuspa A."/>
        </authorList>
    </citation>
    <scope>NUCLEOTIDE SEQUENCE [LARGE SCALE GENOMIC DNA]</scope>
    <source>
        <strain>AX4</strain>
    </source>
</reference>
<reference key="2">
    <citation type="journal article" date="2009" name="J. Mol. Biol.">
        <title>Histone deacetylases regulate multicellular development in the social amoeba Dictyostelium discoideum.</title>
        <authorList>
            <person name="Sawarkar R."/>
            <person name="Visweswariah S.S."/>
            <person name="Nellen W."/>
            <person name="Nanjundiah V."/>
        </authorList>
    </citation>
    <scope>DEVELOPMENTAL STAGE</scope>
</reference>
<name>HDA21_DICDI</name>
<sequence>MSTIHQVNEMNSRVGEKPACCIGAARGHCTAHCPRIEDVLYSQRKGKTNKGAQRWRCKACGTKWTSKGIIIQPPVVPDTIVNSIGFGNGPEEISMEQLRANARPYKKTKTGDNILQTSPFPSLFGNSIGMGLGGNNNNINNNNNSNGSNSSNNSHNGGSSPSGSPIPSPPSPVSFLQRNSNVFVPILPQSNGNNINNNNNNNSNSNSNNINSNSSNSMQLQNNNNNNGQLRSSSSSLSLSSSSSQLNSSSNGNGSSRNLLTSQKSAQSLIGNINNNNNNNNIINNNSNNNTNNNNNIMNGTTTSTTKPVVVGGPMQILNSVVNNSPTSSKPILSSSSQNLLYNSSGSIPQPSQSPQNNNNTTINNNNNTTNNNNNNNNSNNNNNSNNNNNNSNNNNINNVANGTPRPSLQTSRLQGKLPSPQQYNTSPSHQQYPSPKNNNNSNNIIPIQSTYGQPTPPPTKPPVSSKAPAVYHNVRVPSPNTTVDNNNNNNNNNNNNNNNNNNNNNNNNNNNSNNNNNSNNNNNNINNNNNNNNNSNNNNNGNSNNNNNNNSNYQQQHQYFSPNQNYIQQQVQAVQTQQAQHILAQQQAQAQQQYIQQLQLQQQTLAHAQSQAAHQAQTLTHSRHNDLLSPIDSQIWAPIQYSWIQTHYNPSSSLLECLKRLINSVVVFSNELPVDQRLKMINFLTTLSSPSSESQYNTNASKQMLNCIDNSVFNITKHYQMLYQSISKHYSMMEDSFIPLTEVYFDENEINKFIHFSDQFKIIEEQFEFILRELSSIRDTLIIKRENIEKNIIESSKFLNNSSNNDNGIEEIGLEQAKQDTTRLLESLAPLETTLNSMEIKFKSIQKEISMVIRVFSFFELLYNIHINCHQTIVEKHSRQLSTYMIDVIQQSLYNCDVISVAYNRLKTGLFNSNNNNNNNNNNNNNNNEEDDQLIDTTNPFINKLSDLLSKYENISKNNNNNNNNNNNNNNNNNNNNNNNNNNNNNNRNRDRDREFERDNNSNNNNNNIEKERNRNNRIRDRDNMDIDNISSFISNNQQQHIGQSQSVQQSSQLPKERKVMALYHTTCLDHLVPDDHPESPKRLSSVIKAINDFSRQSDRLIIKNDPEEINDKWILTVHSPEYLRLLEDLTEKLDANEIRPLNVNNDGASTGINQFSTSTPITTTGTATVTPGSTTSSTNGEQCEDGDTFVSKLSLHAAKRSAGATCQAIDNVMKGNVTSAFVAARPPGHHAGRDGLTSGTSSQGFCLLNHVCIGAKYAQLKYNLDKIAIIDFDVHHGNGTEEILSNDQGFYFLSIHMFEEGFYPGSGGGVGSIGVVNLNEFNEQNDYDDDDNNNDVNNNNNNNNNNNNNNNNNNNNKNNNNNNSNSITQQSTITNNSNCKGNIVNIPLDPKSSASSFLKAFSIIIDKLNDYQPELILISCGFDAHMEDHLASLCLLEENYVEITRSLRRVADRWCKGRLVSILEGGYNINALRQCTIAHLSALSEDD</sequence>
<accession>Q54X15</accession>